<evidence type="ECO:0000255" key="1">
    <source>
        <dbReference type="HAMAP-Rule" id="MF_01238"/>
    </source>
</evidence>
<proteinExistence type="inferred from homology"/>
<gene>
    <name evidence="1" type="primary">nanT</name>
    <name type="ordered locus">SPAB_04162</name>
</gene>
<feature type="chain" id="PRO_1000214064" description="Sialic acid transporter NanT">
    <location>
        <begin position="1"/>
        <end position="496"/>
    </location>
</feature>
<feature type="transmembrane region" description="Helical" evidence="1">
    <location>
        <begin position="22"/>
        <end position="42"/>
    </location>
</feature>
<feature type="transmembrane region" description="Helical" evidence="1">
    <location>
        <begin position="58"/>
        <end position="78"/>
    </location>
</feature>
<feature type="transmembrane region" description="Helical" evidence="1">
    <location>
        <begin position="86"/>
        <end position="106"/>
    </location>
</feature>
<feature type="transmembrane region" description="Helical" evidence="1">
    <location>
        <begin position="116"/>
        <end position="136"/>
    </location>
</feature>
<feature type="transmembrane region" description="Helical" evidence="1">
    <location>
        <begin position="148"/>
        <end position="168"/>
    </location>
</feature>
<feature type="transmembrane region" description="Helical" evidence="1">
    <location>
        <begin position="170"/>
        <end position="190"/>
    </location>
</feature>
<feature type="transmembrane region" description="Helical" evidence="1">
    <location>
        <begin position="224"/>
        <end position="244"/>
    </location>
</feature>
<feature type="transmembrane region" description="Helical" evidence="1">
    <location>
        <begin position="247"/>
        <end position="267"/>
    </location>
</feature>
<feature type="transmembrane region" description="Helical" evidence="1">
    <location>
        <begin position="278"/>
        <end position="298"/>
    </location>
</feature>
<feature type="transmembrane region" description="Helical" evidence="1">
    <location>
        <begin position="313"/>
        <end position="333"/>
    </location>
</feature>
<feature type="transmembrane region" description="Helical" evidence="1">
    <location>
        <begin position="353"/>
        <end position="373"/>
    </location>
</feature>
<feature type="transmembrane region" description="Helical" evidence="1">
    <location>
        <begin position="374"/>
        <end position="394"/>
    </location>
</feature>
<feature type="transmembrane region" description="Helical" evidence="1">
    <location>
        <begin position="406"/>
        <end position="426"/>
    </location>
</feature>
<feature type="transmembrane region" description="Helical" evidence="1">
    <location>
        <begin position="431"/>
        <end position="451"/>
    </location>
</feature>
<sequence>MSTSTQNIPWYRHLNRAQWRAFSAAWLGYLLDGFDFVLIALVLTEVQSEFGLTTVQAASLISAAFISRWFGGLLLGAMGDRYGRRLAMVSSIILFSVGTLACGFAPGYTTMFIARLVIGMGMAGEYGSSATYVIESWPKHLRNKASGFLISGFSVGAVVAAQVYSLVVPVWGWRALFFIGILPIIFALWLRKNIPEAEDWKEKHAGKAPVRTMVDILYRGEHRIINILMTFAAAAALWFCFAGNLQNAAIVAGLGLLCAVIFISFMVQSSGKRWPTGVMLMLVVLFAFLYSWPIQALLPTYLKTELAYDPHTVANVLFFSGFGAAVGCCVGGFLGDWLGTRKAYVCSLLASQILIIPVFAIGGTNVWVLGLLLFFQQMLGQGIAGILPKLIGGYFDTDQRAAGLGFTYNVGALGGALAPILGALIAQRLDLGTALASLSFSLTFVVILLIGLDMPSRVQRWLRPEALRTHDAIDDKPFSGAVPLGSGKGAFVKTKS</sequence>
<name>NANT_SALPB</name>
<comment type="function">
    <text evidence="1">Catalyzes the proton-dependent transport of sialic acid.</text>
</comment>
<comment type="catalytic activity">
    <reaction evidence="1">
        <text>N-acetylneuraminate(in) + H(+)(in) = N-acetylneuraminate(out) + H(+)(out)</text>
        <dbReference type="Rhea" id="RHEA:28987"/>
        <dbReference type="ChEBI" id="CHEBI:15378"/>
        <dbReference type="ChEBI" id="CHEBI:35418"/>
    </reaction>
</comment>
<comment type="subcellular location">
    <subcellularLocation>
        <location evidence="1">Cell inner membrane</location>
        <topology evidence="1">Multi-pass membrane protein</topology>
    </subcellularLocation>
</comment>
<comment type="similarity">
    <text evidence="1">Belongs to the major facilitator superfamily. Sialate:H(+) symporter (SHS) (TC 2.A.1.12) family.</text>
</comment>
<protein>
    <recommendedName>
        <fullName evidence="1">Sialic acid transporter NanT</fullName>
    </recommendedName>
    <alternativeName>
        <fullName evidence="1">Sialic acid permease</fullName>
    </alternativeName>
    <alternativeName>
        <fullName evidence="1">Sialic acid/H(+) symporter</fullName>
    </alternativeName>
</protein>
<keyword id="KW-0997">Cell inner membrane</keyword>
<keyword id="KW-1003">Cell membrane</keyword>
<keyword id="KW-0472">Membrane</keyword>
<keyword id="KW-0762">Sugar transport</keyword>
<keyword id="KW-0812">Transmembrane</keyword>
<keyword id="KW-1133">Transmembrane helix</keyword>
<keyword id="KW-0813">Transport</keyword>
<accession>A9N832</accession>
<reference key="1">
    <citation type="submission" date="2007-11" db="EMBL/GenBank/DDBJ databases">
        <authorList>
            <consortium name="The Salmonella enterica serovar Paratyphi B Genome Sequencing Project"/>
            <person name="McClelland M."/>
            <person name="Sanderson E.K."/>
            <person name="Porwollik S."/>
            <person name="Spieth J."/>
            <person name="Clifton W.S."/>
            <person name="Fulton R."/>
            <person name="Cordes M."/>
            <person name="Wollam A."/>
            <person name="Shah N."/>
            <person name="Pepin K."/>
            <person name="Bhonagiri V."/>
            <person name="Nash W."/>
            <person name="Johnson M."/>
            <person name="Thiruvilangam P."/>
            <person name="Wilson R."/>
        </authorList>
    </citation>
    <scope>NUCLEOTIDE SEQUENCE [LARGE SCALE GENOMIC DNA]</scope>
    <source>
        <strain>ATCC BAA-1250 / SPB7</strain>
    </source>
</reference>
<organism>
    <name type="scientific">Salmonella paratyphi B (strain ATCC BAA-1250 / SPB7)</name>
    <dbReference type="NCBI Taxonomy" id="1016998"/>
    <lineage>
        <taxon>Bacteria</taxon>
        <taxon>Pseudomonadati</taxon>
        <taxon>Pseudomonadota</taxon>
        <taxon>Gammaproteobacteria</taxon>
        <taxon>Enterobacterales</taxon>
        <taxon>Enterobacteriaceae</taxon>
        <taxon>Salmonella</taxon>
    </lineage>
</organism>
<dbReference type="EMBL" id="CP000886">
    <property type="protein sequence ID" value="ABX69485.1"/>
    <property type="molecule type" value="Genomic_DNA"/>
</dbReference>
<dbReference type="RefSeq" id="WP_000108071.1">
    <property type="nucleotide sequence ID" value="NC_010102.1"/>
</dbReference>
<dbReference type="SMR" id="A9N832"/>
<dbReference type="KEGG" id="spq:SPAB_04162"/>
<dbReference type="PATRIC" id="fig|1016998.12.peg.3919"/>
<dbReference type="HOGENOM" id="CLU_001265_46_8_6"/>
<dbReference type="BioCyc" id="SENT1016998:SPAB_RS16920-MONOMER"/>
<dbReference type="Proteomes" id="UP000008556">
    <property type="component" value="Chromosome"/>
</dbReference>
<dbReference type="GO" id="GO:0005886">
    <property type="term" value="C:plasma membrane"/>
    <property type="evidence" value="ECO:0007669"/>
    <property type="project" value="UniProtKB-SubCell"/>
</dbReference>
<dbReference type="GO" id="GO:0046943">
    <property type="term" value="F:carboxylic acid transmembrane transporter activity"/>
    <property type="evidence" value="ECO:0007669"/>
    <property type="project" value="TreeGrafter"/>
</dbReference>
<dbReference type="GO" id="GO:0015538">
    <property type="term" value="F:sialic acid:proton symporter activity"/>
    <property type="evidence" value="ECO:0007669"/>
    <property type="project" value="UniProtKB-UniRule"/>
</dbReference>
<dbReference type="CDD" id="cd17316">
    <property type="entry name" value="MFS_SV2_like"/>
    <property type="match status" value="1"/>
</dbReference>
<dbReference type="FunFam" id="1.20.1250.20:FF:000027">
    <property type="entry name" value="Sialic acid transporter NanT"/>
    <property type="match status" value="1"/>
</dbReference>
<dbReference type="FunFam" id="1.20.1250.20:FF:000038">
    <property type="entry name" value="Sialic acid transporter NanT"/>
    <property type="match status" value="1"/>
</dbReference>
<dbReference type="Gene3D" id="1.20.1250.20">
    <property type="entry name" value="MFS general substrate transporter like domains"/>
    <property type="match status" value="2"/>
</dbReference>
<dbReference type="HAMAP" id="MF_01238">
    <property type="entry name" value="MFS_NanT"/>
    <property type="match status" value="1"/>
</dbReference>
<dbReference type="InterPro" id="IPR011701">
    <property type="entry name" value="MFS"/>
</dbReference>
<dbReference type="InterPro" id="IPR020846">
    <property type="entry name" value="MFS_dom"/>
</dbReference>
<dbReference type="InterPro" id="IPR036259">
    <property type="entry name" value="MFS_trans_sf"/>
</dbReference>
<dbReference type="InterPro" id="IPR004742">
    <property type="entry name" value="SA_transporter"/>
</dbReference>
<dbReference type="NCBIfam" id="TIGR00891">
    <property type="entry name" value="2A0112"/>
    <property type="match status" value="1"/>
</dbReference>
<dbReference type="NCBIfam" id="NF003024">
    <property type="entry name" value="PRK03893.1"/>
    <property type="match status" value="1"/>
</dbReference>
<dbReference type="PANTHER" id="PTHR23508">
    <property type="entry name" value="CARBOXYLIC ACID TRANSPORTER PROTEIN HOMOLOG"/>
    <property type="match status" value="1"/>
</dbReference>
<dbReference type="PANTHER" id="PTHR23508:SF3">
    <property type="entry name" value="SIALIC ACID TRANSPORTER NANT"/>
    <property type="match status" value="1"/>
</dbReference>
<dbReference type="Pfam" id="PF07690">
    <property type="entry name" value="MFS_1"/>
    <property type="match status" value="1"/>
</dbReference>
<dbReference type="SUPFAM" id="SSF103473">
    <property type="entry name" value="MFS general substrate transporter"/>
    <property type="match status" value="1"/>
</dbReference>
<dbReference type="PROSITE" id="PS50850">
    <property type="entry name" value="MFS"/>
    <property type="match status" value="1"/>
</dbReference>